<feature type="chain" id="PRO_0000077738" description="Superinfection exclusion protein B">
    <location>
        <begin position="1"/>
        <end position="184"/>
    </location>
</feature>
<feature type="transmembrane region" description="Helical" evidence="1">
    <location>
        <begin position="23"/>
        <end position="39"/>
    </location>
</feature>
<feature type="transmembrane region" description="Helical" evidence="1">
    <location>
        <begin position="55"/>
        <end position="71"/>
    </location>
</feature>
<keyword id="KW-1043">Host membrane</keyword>
<keyword id="KW-0472">Membrane</keyword>
<keyword id="KW-1185">Reference proteome</keyword>
<keyword id="KW-0812">Transmembrane</keyword>
<keyword id="KW-1133">Transmembrane helix</keyword>
<reference key="1">
    <citation type="journal article" date="1982" name="J. Mol. Biol.">
        <title>Nucleotide sequence of bacteriophage lambda DNA.</title>
        <authorList>
            <person name="Sanger F."/>
            <person name="Coulson A.R."/>
            <person name="Hong G.F."/>
            <person name="Hill D.F."/>
            <person name="Petersen G.B."/>
        </authorList>
    </citation>
    <scope>NUCLEOTIDE SEQUENCE [LARGE SCALE GENOMIC DNA]</scope>
</reference>
<reference key="2">
    <citation type="journal article" date="1981" name="Nucleic Acids Res.">
        <title>The DNA sequence of the phage lambda genome between PL and the gene bet.</title>
        <authorList>
            <person name="Ineichen K."/>
            <person name="Shepherd J.C.W."/>
            <person name="Bickle T.A."/>
        </authorList>
    </citation>
    <scope>NUCLEOTIDE SEQUENCE [GENOMIC DNA]</scope>
</reference>
<reference key="3">
    <citation type="journal article" date="1993" name="J. Bacteriol.">
        <title>Superinfection exclusion (sieB) genes of bacteriophages P22 and lambda.</title>
        <authorList>
            <person name="Ranade K."/>
            <person name="Poteete A.R."/>
        </authorList>
    </citation>
    <scope>IDENTIFICATION</scope>
</reference>
<dbReference type="EMBL" id="J02459">
    <property type="status" value="NOT_ANNOTATED_CDS"/>
    <property type="molecule type" value="Genomic_DNA"/>
</dbReference>
<dbReference type="EMBL" id="V00638">
    <property type="protein sequence ID" value="CAA23982.1"/>
    <property type="status" value="ALT_INIT"/>
    <property type="molecule type" value="Genomic_DNA"/>
</dbReference>
<dbReference type="PIR" id="I43010">
    <property type="entry name" value="QQBPGL"/>
</dbReference>
<dbReference type="IntAct" id="P03762">
    <property type="interactions" value="3"/>
</dbReference>
<dbReference type="Proteomes" id="UP000001711">
    <property type="component" value="Genome"/>
</dbReference>
<dbReference type="GO" id="GO:0033644">
    <property type="term" value="C:host cell membrane"/>
    <property type="evidence" value="ECO:0007669"/>
    <property type="project" value="UniProtKB-SubCell"/>
</dbReference>
<dbReference type="GO" id="GO:0016020">
    <property type="term" value="C:membrane"/>
    <property type="evidence" value="ECO:0007669"/>
    <property type="project" value="UniProtKB-KW"/>
</dbReference>
<dbReference type="InterPro" id="IPR025982">
    <property type="entry name" value="SieB"/>
</dbReference>
<dbReference type="Pfam" id="PF14163">
    <property type="entry name" value="SieB"/>
    <property type="match status" value="1"/>
</dbReference>
<sequence>MMSIEMDPLVILGRVFSNEPLERTMYMIVIWVGLLLLSPDNWPEYVNERIGIPHVWHVFVFALAFSLAINVHRLSAIASARYKRFKLRKRIKMQNDKVRSVIQNLTEEQSMVLCAALNEGRKYVVTSKQFPYISELIELGVLNKTFSRWNGKHILFPIEDIYWTELVASYDPYNIEIKPRPISK</sequence>
<organism>
    <name type="scientific">Escherichia phage lambda</name>
    <name type="common">Bacteriophage lambda</name>
    <dbReference type="NCBI Taxonomy" id="2681611"/>
    <lineage>
        <taxon>Viruses</taxon>
        <taxon>Duplodnaviria</taxon>
        <taxon>Heunggongvirae</taxon>
        <taxon>Uroviricota</taxon>
        <taxon>Caudoviricetes</taxon>
        <taxon>Lambdavirus</taxon>
        <taxon>Lambdavirus lambda</taxon>
    </lineage>
</organism>
<accession>P03762</accession>
<protein>
    <recommendedName>
        <fullName>Superinfection exclusion protein B</fullName>
    </recommendedName>
</protein>
<name>SIEB_LAMBD</name>
<proteinExistence type="predicted"/>
<comment type="function">
    <text>Has a role in the prevention of superinfection by phages that are insensitive to repression.</text>
</comment>
<comment type="subcellular location">
    <subcellularLocation>
        <location evidence="2">Host membrane</location>
        <topology evidence="2">Multi-pass membrane protein</topology>
    </subcellularLocation>
</comment>
<comment type="caution">
    <text evidence="2">It is uncertain whether Met-1, Met-2 or Met-6 is the initiator.</text>
</comment>
<comment type="sequence caution" evidence="2">
    <conflict type="erroneous initiation">
        <sequence resource="EMBL-CDS" id="CAA23982"/>
    </conflict>
</comment>
<gene>
    <name type="primary">sieB</name>
    <name type="synonym">git</name>
</gene>
<organismHost>
    <name type="scientific">Escherichia coli</name>
    <dbReference type="NCBI Taxonomy" id="562"/>
</organismHost>
<evidence type="ECO:0000255" key="1"/>
<evidence type="ECO:0000305" key="2"/>